<keyword id="KW-0028">Amino-acid biosynthesis</keyword>
<keyword id="KW-0963">Cytoplasm</keyword>
<keyword id="KW-0368">Histidine biosynthesis</keyword>
<dbReference type="EMBL" id="BX548174">
    <property type="protein sequence ID" value="CAE19359.1"/>
    <property type="molecule type" value="Genomic_DNA"/>
</dbReference>
<dbReference type="RefSeq" id="WP_011132533.1">
    <property type="nucleotide sequence ID" value="NC_005072.1"/>
</dbReference>
<dbReference type="SMR" id="Q7TU96"/>
<dbReference type="STRING" id="59919.PMM0900"/>
<dbReference type="KEGG" id="pmm:PMM0900"/>
<dbReference type="eggNOG" id="COG3705">
    <property type="taxonomic scope" value="Bacteria"/>
</dbReference>
<dbReference type="HOGENOM" id="CLU_025113_0_2_3"/>
<dbReference type="OrthoDB" id="9800814at2"/>
<dbReference type="UniPathway" id="UPA00031">
    <property type="reaction ID" value="UER00006"/>
</dbReference>
<dbReference type="Proteomes" id="UP000001026">
    <property type="component" value="Chromosome"/>
</dbReference>
<dbReference type="GO" id="GO:0005737">
    <property type="term" value="C:cytoplasm"/>
    <property type="evidence" value="ECO:0007669"/>
    <property type="project" value="UniProtKB-SubCell"/>
</dbReference>
<dbReference type="GO" id="GO:0004821">
    <property type="term" value="F:histidine-tRNA ligase activity"/>
    <property type="evidence" value="ECO:0007669"/>
    <property type="project" value="TreeGrafter"/>
</dbReference>
<dbReference type="GO" id="GO:0006427">
    <property type="term" value="P:histidyl-tRNA aminoacylation"/>
    <property type="evidence" value="ECO:0007669"/>
    <property type="project" value="TreeGrafter"/>
</dbReference>
<dbReference type="GO" id="GO:0000105">
    <property type="term" value="P:L-histidine biosynthetic process"/>
    <property type="evidence" value="ECO:0007669"/>
    <property type="project" value="UniProtKB-UniPathway"/>
</dbReference>
<dbReference type="Gene3D" id="3.30.930.10">
    <property type="entry name" value="Bira Bifunctional Protein, Domain 2"/>
    <property type="match status" value="1"/>
</dbReference>
<dbReference type="InterPro" id="IPR045864">
    <property type="entry name" value="aa-tRNA-synth_II/BPL/LPL"/>
</dbReference>
<dbReference type="InterPro" id="IPR041715">
    <property type="entry name" value="HisRS-like_core"/>
</dbReference>
<dbReference type="InterPro" id="IPR004516">
    <property type="entry name" value="HisRS/HisZ"/>
</dbReference>
<dbReference type="NCBIfam" id="NF008939">
    <property type="entry name" value="PRK12292.2-1"/>
    <property type="match status" value="1"/>
</dbReference>
<dbReference type="PANTHER" id="PTHR43707:SF1">
    <property type="entry name" value="HISTIDINE--TRNA LIGASE, MITOCHONDRIAL-RELATED"/>
    <property type="match status" value="1"/>
</dbReference>
<dbReference type="PANTHER" id="PTHR43707">
    <property type="entry name" value="HISTIDYL-TRNA SYNTHETASE"/>
    <property type="match status" value="1"/>
</dbReference>
<dbReference type="Pfam" id="PF13393">
    <property type="entry name" value="tRNA-synt_His"/>
    <property type="match status" value="1"/>
</dbReference>
<dbReference type="PIRSF" id="PIRSF001549">
    <property type="entry name" value="His-tRNA_synth"/>
    <property type="match status" value="1"/>
</dbReference>
<dbReference type="SUPFAM" id="SSF55681">
    <property type="entry name" value="Class II aaRS and biotin synthetases"/>
    <property type="match status" value="1"/>
</dbReference>
<organism>
    <name type="scientific">Prochlorococcus marinus subsp. pastoris (strain CCMP1986 / NIES-2087 / MED4)</name>
    <dbReference type="NCBI Taxonomy" id="59919"/>
    <lineage>
        <taxon>Bacteria</taxon>
        <taxon>Bacillati</taxon>
        <taxon>Cyanobacteriota</taxon>
        <taxon>Cyanophyceae</taxon>
        <taxon>Synechococcales</taxon>
        <taxon>Prochlorococcaceae</taxon>
        <taxon>Prochlorococcus</taxon>
    </lineage>
</organism>
<protein>
    <recommendedName>
        <fullName>ATP phosphoribosyltransferase regulatory subunit</fullName>
    </recommendedName>
</protein>
<gene>
    <name type="primary">hisZ</name>
    <name type="ordered locus">PMM0900</name>
</gene>
<feature type="chain" id="PRO_0000171051" description="ATP phosphoribosyltransferase regulatory subunit">
    <location>
        <begin position="1"/>
        <end position="383"/>
    </location>
</feature>
<comment type="function">
    <text evidence="1">Required for the first step of histidine biosynthesis. May allow the feedback regulation of ATP phosphoribosyltransferase activity by histidine (By similarity).</text>
</comment>
<comment type="pathway">
    <text>Amino-acid biosynthesis; L-histidine biosynthesis; L-histidine from 5-phospho-alpha-D-ribose 1-diphosphate: step 1/9.</text>
</comment>
<comment type="subunit">
    <text evidence="1">Heteromultimer composed of HisG and HisZ subunits.</text>
</comment>
<comment type="subcellular location">
    <subcellularLocation>
        <location evidence="1">Cytoplasm</location>
    </subcellularLocation>
</comment>
<comment type="miscellaneous">
    <text>This function is generally fulfilled by the C-terminal part of HisG, which is missing in some bacteria such as this one.</text>
</comment>
<comment type="similarity">
    <text evidence="2">Belongs to the class-II aminoacyl-tRNA synthetase family. HisZ subfamily.</text>
</comment>
<name>HISZ_PROMP</name>
<sequence>MSDIKEFNLIDVRNNSSIVNDLNNVYKLWGYEEISPSFINNLETIKGREVIDGDELIGIVSNSSLCLRPEMTTSIVKLTSTRLLNKKRPIRLFNSGIVFNKKQSYKNTYKFQENLQSGIELISYDTQYPEIEVINILFDAIDNINLIDSCNLTLLVSTTKIMDLILFNYKNNNYEEIKKCMVNLDHESLDKLNIDNNDKAILKELLFTRGEPAIILKKLKNIYGNNNVIEELDCLFNTLSKISKKYNIKIQLDPTYQPHLNLYAGIVFQLICDNKNVKTIIAKGGRYDELVRYFNPNEKIINGIGFTISIDNLRELIVEKSQTKKKVLLLFKNSYLLDKGINEQKALQKKGIITILYLNPCNDNSKANILMKEHNCTEIQWIK</sequence>
<accession>Q7TU96</accession>
<proteinExistence type="inferred from homology"/>
<reference key="1">
    <citation type="journal article" date="2003" name="Nature">
        <title>Genome divergence in two Prochlorococcus ecotypes reflects oceanic niche differentiation.</title>
        <authorList>
            <person name="Rocap G."/>
            <person name="Larimer F.W."/>
            <person name="Lamerdin J.E."/>
            <person name="Malfatti S."/>
            <person name="Chain P."/>
            <person name="Ahlgren N.A."/>
            <person name="Arellano A."/>
            <person name="Coleman M."/>
            <person name="Hauser L."/>
            <person name="Hess W.R."/>
            <person name="Johnson Z.I."/>
            <person name="Land M.L."/>
            <person name="Lindell D."/>
            <person name="Post A.F."/>
            <person name="Regala W."/>
            <person name="Shah M."/>
            <person name="Shaw S.L."/>
            <person name="Steglich C."/>
            <person name="Sullivan M.B."/>
            <person name="Ting C.S."/>
            <person name="Tolonen A."/>
            <person name="Webb E.A."/>
            <person name="Zinser E.R."/>
            <person name="Chisholm S.W."/>
        </authorList>
    </citation>
    <scope>NUCLEOTIDE SEQUENCE [LARGE SCALE GENOMIC DNA]</scope>
    <source>
        <strain>CCMP1986 / NIES-2087 / MED4</strain>
    </source>
</reference>
<evidence type="ECO:0000250" key="1"/>
<evidence type="ECO:0000305" key="2"/>